<protein>
    <recommendedName>
        <fullName>Gene 19.2 protein</fullName>
    </recommendedName>
</protein>
<sequence length="146" mass="15988">MGTPQSSGLRSIRVAVRKTCTMVNVWPLCSVRSSTMGSRCSKANQLTPCDSTWKTYGNVSWNTVRLASLYSSCLTRTLVMPRSTPYASVTLSCAVLTSRKPQCTTSGFRTVRIAMRSCLTWALRVMTFIAIIRAARTLDSTSNASS</sequence>
<accession>P10303</accession>
<gene>
    <name type="primary">19.2</name>
</gene>
<reference key="1">
    <citation type="journal article" date="1986" name="Virology">
        <title>Cloning and sequencing of the genetic right end of bacteriophage T3 DNA.</title>
        <authorList>
            <person name="Yamada M."/>
            <person name="Fujisawa H."/>
            <person name="Kato H."/>
            <person name="Hamada K."/>
            <person name="Minagawa T."/>
        </authorList>
    </citation>
    <scope>NUCLEOTIDE SEQUENCE [GENOMIC DNA]</scope>
</reference>
<reference key="2">
    <citation type="journal article" date="1986" name="Virology">
        <authorList>
            <person name="Yamada M."/>
            <person name="Fujisawa H."/>
            <person name="Kato H."/>
            <person name="Hamada K."/>
            <person name="Minagawa T."/>
        </authorList>
    </citation>
    <scope>ERRATUM OF PUBMED:3010556</scope>
</reference>
<dbReference type="EMBL" id="M14784">
    <property type="protein sequence ID" value="AAA92529.1"/>
    <property type="molecule type" value="Genomic_DNA"/>
</dbReference>
<dbReference type="PIR" id="G23476">
    <property type="entry name" value="W9BPT3"/>
</dbReference>
<dbReference type="RefSeq" id="NP_523348.1">
    <property type="nucleotide sequence ID" value="NC_003298.1"/>
</dbReference>
<dbReference type="KEGG" id="vg:927407"/>
<dbReference type="OrthoDB" id="23423at10239"/>
<dbReference type="InterPro" id="IPR020148">
    <property type="entry name" value="DUF5477"/>
</dbReference>
<dbReference type="Pfam" id="PF17571">
    <property type="entry name" value="DUF5477"/>
    <property type="match status" value="1"/>
</dbReference>
<proteinExistence type="predicted"/>
<name>V192_BPT3</name>
<organismHost>
    <name type="scientific">Escherichia coli</name>
    <dbReference type="NCBI Taxonomy" id="562"/>
</organismHost>
<feature type="chain" id="PRO_0000106542" description="Gene 19.2 protein">
    <location>
        <begin position="1"/>
        <end position="146"/>
    </location>
</feature>
<organism>
    <name type="scientific">Enterobacteria phage T3</name>
    <name type="common">Bacteriophage T3</name>
    <dbReference type="NCBI Taxonomy" id="10759"/>
    <lineage>
        <taxon>Viruses</taxon>
        <taxon>Duplodnaviria</taxon>
        <taxon>Heunggongvirae</taxon>
        <taxon>Uroviricota</taxon>
        <taxon>Caudoviricetes</taxon>
        <taxon>Autographiviridae</taxon>
        <taxon>Studiervirinae</taxon>
        <taxon>Teetrevirus</taxon>
        <taxon>Teetrevirus T3</taxon>
    </lineage>
</organism>